<sequence length="184" mass="20359">MANEQNEQAQDIQNEQVEQSNEQTQAEGVEQANDVTVESLQAQITKLEENLKLEKARTANAVYEAQKSVERIQRESEKHKETVLEKFAKELLDSVDNLERAIQAAGDEETPVLEGVKLTLKSLLTTLEKFGVVEADTQNGFNADLHQAVGIDPNAKANEIGTVLQKGYTLNGRLLRPAMVMVGQ</sequence>
<name>GRPE_ACIBY</name>
<keyword id="KW-0143">Chaperone</keyword>
<keyword id="KW-0963">Cytoplasm</keyword>
<keyword id="KW-0346">Stress response</keyword>
<reference key="1">
    <citation type="journal article" date="2008" name="PLoS ONE">
        <title>Comparative analysis of Acinetobacters: three genomes for three lifestyles.</title>
        <authorList>
            <person name="Vallenet D."/>
            <person name="Nordmann P."/>
            <person name="Barbe V."/>
            <person name="Poirel L."/>
            <person name="Mangenot S."/>
            <person name="Bataille E."/>
            <person name="Dossat C."/>
            <person name="Gas S."/>
            <person name="Kreimeyer A."/>
            <person name="Lenoble P."/>
            <person name="Oztas S."/>
            <person name="Poulain J."/>
            <person name="Segurens B."/>
            <person name="Robert C."/>
            <person name="Abergel C."/>
            <person name="Claverie J.-M."/>
            <person name="Raoult D."/>
            <person name="Medigue C."/>
            <person name="Weissenbach J."/>
            <person name="Cruveiller S."/>
        </authorList>
    </citation>
    <scope>NUCLEOTIDE SEQUENCE [LARGE SCALE GENOMIC DNA]</scope>
    <source>
        <strain>AYE</strain>
    </source>
</reference>
<gene>
    <name evidence="1" type="primary">grpE</name>
    <name type="ordered locus">ABAYE3864</name>
</gene>
<proteinExistence type="inferred from homology"/>
<organism>
    <name type="scientific">Acinetobacter baumannii (strain AYE)</name>
    <dbReference type="NCBI Taxonomy" id="509173"/>
    <lineage>
        <taxon>Bacteria</taxon>
        <taxon>Pseudomonadati</taxon>
        <taxon>Pseudomonadota</taxon>
        <taxon>Gammaproteobacteria</taxon>
        <taxon>Moraxellales</taxon>
        <taxon>Moraxellaceae</taxon>
        <taxon>Acinetobacter</taxon>
        <taxon>Acinetobacter calcoaceticus/baumannii complex</taxon>
    </lineage>
</organism>
<protein>
    <recommendedName>
        <fullName evidence="1">Protein GrpE</fullName>
    </recommendedName>
    <alternativeName>
        <fullName evidence="1">HSP-70 cofactor</fullName>
    </alternativeName>
</protein>
<feature type="chain" id="PRO_1000137526" description="Protein GrpE">
    <location>
        <begin position="1"/>
        <end position="184"/>
    </location>
</feature>
<feature type="region of interest" description="Disordered" evidence="2">
    <location>
        <begin position="1"/>
        <end position="34"/>
    </location>
</feature>
<feature type="compositionally biased region" description="Polar residues" evidence="2">
    <location>
        <begin position="1"/>
        <end position="26"/>
    </location>
</feature>
<dbReference type="EMBL" id="CU459141">
    <property type="protein sequence ID" value="CAM88620.1"/>
    <property type="molecule type" value="Genomic_DNA"/>
</dbReference>
<dbReference type="RefSeq" id="WP_001262789.1">
    <property type="nucleotide sequence ID" value="NZ_JBDGFB010000012.1"/>
</dbReference>
<dbReference type="SMR" id="B0V5U3"/>
<dbReference type="EnsemblBacteria" id="CAM88620">
    <property type="protein sequence ID" value="CAM88620"/>
    <property type="gene ID" value="ABAYE3864"/>
</dbReference>
<dbReference type="GeneID" id="92891967"/>
<dbReference type="KEGG" id="aby:ABAYE3864"/>
<dbReference type="HOGENOM" id="CLU_057217_6_0_6"/>
<dbReference type="GO" id="GO:0005829">
    <property type="term" value="C:cytosol"/>
    <property type="evidence" value="ECO:0007669"/>
    <property type="project" value="TreeGrafter"/>
</dbReference>
<dbReference type="GO" id="GO:0000774">
    <property type="term" value="F:adenyl-nucleotide exchange factor activity"/>
    <property type="evidence" value="ECO:0007669"/>
    <property type="project" value="InterPro"/>
</dbReference>
<dbReference type="GO" id="GO:0042803">
    <property type="term" value="F:protein homodimerization activity"/>
    <property type="evidence" value="ECO:0007669"/>
    <property type="project" value="InterPro"/>
</dbReference>
<dbReference type="GO" id="GO:0051087">
    <property type="term" value="F:protein-folding chaperone binding"/>
    <property type="evidence" value="ECO:0007669"/>
    <property type="project" value="InterPro"/>
</dbReference>
<dbReference type="GO" id="GO:0051082">
    <property type="term" value="F:unfolded protein binding"/>
    <property type="evidence" value="ECO:0007669"/>
    <property type="project" value="TreeGrafter"/>
</dbReference>
<dbReference type="GO" id="GO:0006457">
    <property type="term" value="P:protein folding"/>
    <property type="evidence" value="ECO:0007669"/>
    <property type="project" value="InterPro"/>
</dbReference>
<dbReference type="CDD" id="cd00446">
    <property type="entry name" value="GrpE"/>
    <property type="match status" value="1"/>
</dbReference>
<dbReference type="Gene3D" id="3.90.20.20">
    <property type="match status" value="1"/>
</dbReference>
<dbReference type="Gene3D" id="2.30.22.10">
    <property type="entry name" value="Head domain of nucleotide exchange factor GrpE"/>
    <property type="match status" value="1"/>
</dbReference>
<dbReference type="HAMAP" id="MF_01151">
    <property type="entry name" value="GrpE"/>
    <property type="match status" value="1"/>
</dbReference>
<dbReference type="InterPro" id="IPR000740">
    <property type="entry name" value="GrpE"/>
</dbReference>
<dbReference type="InterPro" id="IPR013805">
    <property type="entry name" value="GrpE_coiled_coil"/>
</dbReference>
<dbReference type="InterPro" id="IPR009012">
    <property type="entry name" value="GrpE_head"/>
</dbReference>
<dbReference type="PANTHER" id="PTHR21237">
    <property type="entry name" value="GRPE PROTEIN"/>
    <property type="match status" value="1"/>
</dbReference>
<dbReference type="PANTHER" id="PTHR21237:SF23">
    <property type="entry name" value="GRPE PROTEIN HOMOLOG, MITOCHONDRIAL"/>
    <property type="match status" value="1"/>
</dbReference>
<dbReference type="Pfam" id="PF01025">
    <property type="entry name" value="GrpE"/>
    <property type="match status" value="1"/>
</dbReference>
<dbReference type="PRINTS" id="PR00773">
    <property type="entry name" value="GRPEPROTEIN"/>
</dbReference>
<dbReference type="SUPFAM" id="SSF58014">
    <property type="entry name" value="Coiled-coil domain of nucleotide exchange factor GrpE"/>
    <property type="match status" value="1"/>
</dbReference>
<dbReference type="SUPFAM" id="SSF51064">
    <property type="entry name" value="Head domain of nucleotide exchange factor GrpE"/>
    <property type="match status" value="1"/>
</dbReference>
<dbReference type="PROSITE" id="PS01071">
    <property type="entry name" value="GRPE"/>
    <property type="match status" value="1"/>
</dbReference>
<comment type="function">
    <text evidence="1">Participates actively in the response to hyperosmotic and heat shock by preventing the aggregation of stress-denatured proteins, in association with DnaK and GrpE. It is the nucleotide exchange factor for DnaK and may function as a thermosensor. Unfolded proteins bind initially to DnaJ; upon interaction with the DnaJ-bound protein, DnaK hydrolyzes its bound ATP, resulting in the formation of a stable complex. GrpE releases ADP from DnaK; ATP binding to DnaK triggers the release of the substrate protein, thus completing the reaction cycle. Several rounds of ATP-dependent interactions between DnaJ, DnaK and GrpE are required for fully efficient folding.</text>
</comment>
<comment type="subunit">
    <text evidence="1">Homodimer.</text>
</comment>
<comment type="subcellular location">
    <subcellularLocation>
        <location evidence="1">Cytoplasm</location>
    </subcellularLocation>
</comment>
<comment type="similarity">
    <text evidence="1">Belongs to the GrpE family.</text>
</comment>
<evidence type="ECO:0000255" key="1">
    <source>
        <dbReference type="HAMAP-Rule" id="MF_01151"/>
    </source>
</evidence>
<evidence type="ECO:0000256" key="2">
    <source>
        <dbReference type="SAM" id="MobiDB-lite"/>
    </source>
</evidence>
<accession>B0V5U3</accession>